<dbReference type="EMBL" id="U12817">
    <property type="protein sequence ID" value="AAD42918.1"/>
    <property type="molecule type" value="Genomic_DNA"/>
</dbReference>
<dbReference type="EMBL" id="BA000031">
    <property type="protein sequence ID" value="BAC59045.1"/>
    <property type="molecule type" value="Genomic_DNA"/>
</dbReference>
<dbReference type="RefSeq" id="NP_797161.1">
    <property type="nucleotide sequence ID" value="NC_004603.1"/>
</dbReference>
<dbReference type="RefSeq" id="WP_005462288.1">
    <property type="nucleotide sequence ID" value="NC_004603.1"/>
</dbReference>
<dbReference type="SMR" id="Q9X9J5"/>
<dbReference type="GeneID" id="1188279"/>
<dbReference type="KEGG" id="vpa:VP0782"/>
<dbReference type="PATRIC" id="fig|223926.6.peg.747"/>
<dbReference type="eggNOG" id="COG2063">
    <property type="taxonomic scope" value="Bacteria"/>
</dbReference>
<dbReference type="HOGENOM" id="CLU_069313_0_2_6"/>
<dbReference type="Proteomes" id="UP000002493">
    <property type="component" value="Chromosome 1"/>
</dbReference>
<dbReference type="GO" id="GO:0009427">
    <property type="term" value="C:bacterial-type flagellum basal body, distal rod, L ring"/>
    <property type="evidence" value="ECO:0007669"/>
    <property type="project" value="InterPro"/>
</dbReference>
<dbReference type="GO" id="GO:0009279">
    <property type="term" value="C:cell outer membrane"/>
    <property type="evidence" value="ECO:0007669"/>
    <property type="project" value="UniProtKB-SubCell"/>
</dbReference>
<dbReference type="GO" id="GO:0003774">
    <property type="term" value="F:cytoskeletal motor activity"/>
    <property type="evidence" value="ECO:0007669"/>
    <property type="project" value="InterPro"/>
</dbReference>
<dbReference type="GO" id="GO:0071973">
    <property type="term" value="P:bacterial-type flagellum-dependent cell motility"/>
    <property type="evidence" value="ECO:0007669"/>
    <property type="project" value="InterPro"/>
</dbReference>
<dbReference type="HAMAP" id="MF_00415">
    <property type="entry name" value="FlgH"/>
    <property type="match status" value="1"/>
</dbReference>
<dbReference type="InterPro" id="IPR000527">
    <property type="entry name" value="Flag_Lring"/>
</dbReference>
<dbReference type="NCBIfam" id="NF001302">
    <property type="entry name" value="PRK00249.1-2"/>
    <property type="match status" value="1"/>
</dbReference>
<dbReference type="PANTHER" id="PTHR34933">
    <property type="entry name" value="FLAGELLAR L-RING PROTEIN"/>
    <property type="match status" value="1"/>
</dbReference>
<dbReference type="PANTHER" id="PTHR34933:SF1">
    <property type="entry name" value="FLAGELLAR L-RING PROTEIN"/>
    <property type="match status" value="1"/>
</dbReference>
<dbReference type="Pfam" id="PF02107">
    <property type="entry name" value="FlgH"/>
    <property type="match status" value="1"/>
</dbReference>
<dbReference type="PRINTS" id="PR01008">
    <property type="entry name" value="FLGLRINGFLGH"/>
</dbReference>
<dbReference type="PROSITE" id="PS51257">
    <property type="entry name" value="PROKAR_LIPOPROTEIN"/>
    <property type="match status" value="1"/>
</dbReference>
<keyword id="KW-0975">Bacterial flagellum</keyword>
<keyword id="KW-0998">Cell outer membrane</keyword>
<keyword id="KW-0449">Lipoprotein</keyword>
<keyword id="KW-0472">Membrane</keyword>
<keyword id="KW-0564">Palmitate</keyword>
<keyword id="KW-0732">Signal</keyword>
<evidence type="ECO:0000250" key="1"/>
<evidence type="ECO:0000255" key="2"/>
<evidence type="ECO:0000256" key="3">
    <source>
        <dbReference type="SAM" id="MobiDB-lite"/>
    </source>
</evidence>
<evidence type="ECO:0000305" key="4"/>
<sequence length="259" mass="27988">MKRICLLALITTMSGCAMLEPIETDEVTQATTVVDAVEGDKSKDESSGIVDTLRGRNDPVAGDPAWAPIHPKQKPEHYAAATGSLFSPEHITDLYDDSKPRGIGDIITVTLDETTSATKSANADLSKTNEAQMDPLQVGGEELKVGGKYNFSYDLNNTNTFAGDSSAKQSNSISGYITVEVIEVLANGNLVIRGEKWMTLNTGDEYIRLSGTIRPDDINFDNTIASNRVSNARIQYSGTGLSQDMQEPGFLARFFNVAL</sequence>
<feature type="signal peptide" evidence="2">
    <location>
        <begin position="1"/>
        <end position="15"/>
    </location>
</feature>
<feature type="chain" id="PRO_0000009478" description="Flagellar L-ring protein 1">
    <location>
        <begin position="16"/>
        <end position="259"/>
    </location>
</feature>
<feature type="region of interest" description="Disordered" evidence="3">
    <location>
        <begin position="38"/>
        <end position="63"/>
    </location>
</feature>
<feature type="lipid moiety-binding region" description="N-palmitoyl cysteine" evidence="2">
    <location>
        <position position="16"/>
    </location>
</feature>
<feature type="lipid moiety-binding region" description="S-diacylglycerol cysteine" evidence="2">
    <location>
        <position position="16"/>
    </location>
</feature>
<gene>
    <name type="primary">flgH1</name>
    <name type="synonym">flgH</name>
    <name type="ordered locus">VP0782</name>
</gene>
<name>FLGH1_VIBPA</name>
<protein>
    <recommendedName>
        <fullName>Flagellar L-ring protein 1</fullName>
    </recommendedName>
    <alternativeName>
        <fullName>Basal body L-ring protein 1</fullName>
    </alternativeName>
</protein>
<reference key="1">
    <citation type="submission" date="1999-04" db="EMBL/GenBank/DDBJ databases">
        <title>Polar flagellar region I.</title>
        <authorList>
            <person name="McCarter L.L."/>
        </authorList>
    </citation>
    <scope>NUCLEOTIDE SEQUENCE [GENOMIC DNA]</scope>
    <source>
        <strain>BB22</strain>
    </source>
</reference>
<reference key="2">
    <citation type="journal article" date="2003" name="Lancet">
        <title>Genome sequence of Vibrio parahaemolyticus: a pathogenic mechanism distinct from that of V. cholerae.</title>
        <authorList>
            <person name="Makino K."/>
            <person name="Oshima K."/>
            <person name="Kurokawa K."/>
            <person name="Yokoyama K."/>
            <person name="Uda T."/>
            <person name="Tagomori K."/>
            <person name="Iijima Y."/>
            <person name="Najima M."/>
            <person name="Nakano M."/>
            <person name="Yamashita A."/>
            <person name="Kubota Y."/>
            <person name="Kimura S."/>
            <person name="Yasunaga T."/>
            <person name="Honda T."/>
            <person name="Shinagawa H."/>
            <person name="Hattori M."/>
            <person name="Iida T."/>
        </authorList>
    </citation>
    <scope>NUCLEOTIDE SEQUENCE [LARGE SCALE GENOMIC DNA]</scope>
    <source>
        <strain>RIMD 2210633</strain>
    </source>
</reference>
<accession>Q9X9J5</accession>
<comment type="function">
    <text evidence="1">Assembles around the rod to form the L-ring and probably protects the motor/basal body from shearing forces during rotation.</text>
</comment>
<comment type="subunit">
    <text evidence="1">The basal body constitutes a major portion of the flagellar organelle and consists of four rings (L,P,S, and M) mounted on a central rod.</text>
</comment>
<comment type="subcellular location">
    <subcellularLocation>
        <location evidence="1">Cell outer membrane</location>
        <topology evidence="1">Lipid-anchor</topology>
    </subcellularLocation>
    <subcellularLocation>
        <location evidence="1">Bacterial flagellum basal body</location>
    </subcellularLocation>
</comment>
<comment type="similarity">
    <text evidence="4">Belongs to the FlgH family.</text>
</comment>
<proteinExistence type="inferred from homology"/>
<organism>
    <name type="scientific">Vibrio parahaemolyticus serotype O3:K6 (strain RIMD 2210633)</name>
    <dbReference type="NCBI Taxonomy" id="223926"/>
    <lineage>
        <taxon>Bacteria</taxon>
        <taxon>Pseudomonadati</taxon>
        <taxon>Pseudomonadota</taxon>
        <taxon>Gammaproteobacteria</taxon>
        <taxon>Vibrionales</taxon>
        <taxon>Vibrionaceae</taxon>
        <taxon>Vibrio</taxon>
    </lineage>
</organism>